<feature type="chain" id="PRO_1000070466" description="Enoyl-[acyl-carrier-protein] reductase [NADH]">
    <location>
        <begin position="1"/>
        <end position="400"/>
    </location>
</feature>
<feature type="active site" description="Proton donor" evidence="1">
    <location>
        <position position="235"/>
    </location>
</feature>
<feature type="binding site" evidence="1">
    <location>
        <begin position="48"/>
        <end position="53"/>
    </location>
    <ligand>
        <name>NAD(+)</name>
        <dbReference type="ChEBI" id="CHEBI:57540"/>
    </ligand>
</feature>
<feature type="binding site" evidence="1">
    <location>
        <begin position="74"/>
        <end position="75"/>
    </location>
    <ligand>
        <name>NAD(+)</name>
        <dbReference type="ChEBI" id="CHEBI:57540"/>
    </ligand>
</feature>
<feature type="binding site" evidence="1">
    <location>
        <begin position="111"/>
        <end position="112"/>
    </location>
    <ligand>
        <name>NAD(+)</name>
        <dbReference type="ChEBI" id="CHEBI:57540"/>
    </ligand>
</feature>
<feature type="binding site" evidence="1">
    <location>
        <begin position="139"/>
        <end position="140"/>
    </location>
    <ligand>
        <name>NAD(+)</name>
        <dbReference type="ChEBI" id="CHEBI:57540"/>
    </ligand>
</feature>
<feature type="binding site" evidence="1">
    <location>
        <position position="225"/>
    </location>
    <ligand>
        <name>substrate</name>
    </ligand>
</feature>
<feature type="binding site" evidence="1">
    <location>
        <position position="244"/>
    </location>
    <ligand>
        <name>NAD(+)</name>
        <dbReference type="ChEBI" id="CHEBI:57540"/>
    </ligand>
</feature>
<feature type="binding site" evidence="1">
    <location>
        <begin position="273"/>
        <end position="275"/>
    </location>
    <ligand>
        <name>NAD(+)</name>
        <dbReference type="ChEBI" id="CHEBI:57540"/>
    </ligand>
</feature>
<feature type="site" description="Plays an important role in discriminating NADH against NADPH" evidence="1">
    <location>
        <position position="75"/>
    </location>
</feature>
<reference key="1">
    <citation type="submission" date="2006-05" db="EMBL/GenBank/DDBJ databases">
        <title>Complete sequence of chromosome 2 of Burkholderia cenocepacia AU 1054.</title>
        <authorList>
            <consortium name="US DOE Joint Genome Institute"/>
            <person name="Copeland A."/>
            <person name="Lucas S."/>
            <person name="Lapidus A."/>
            <person name="Barry K."/>
            <person name="Detter J.C."/>
            <person name="Glavina del Rio T."/>
            <person name="Hammon N."/>
            <person name="Israni S."/>
            <person name="Dalin E."/>
            <person name="Tice H."/>
            <person name="Pitluck S."/>
            <person name="Chain P."/>
            <person name="Malfatti S."/>
            <person name="Shin M."/>
            <person name="Vergez L."/>
            <person name="Schmutz J."/>
            <person name="Larimer F."/>
            <person name="Land M."/>
            <person name="Hauser L."/>
            <person name="Kyrpides N."/>
            <person name="Lykidis A."/>
            <person name="LiPuma J.J."/>
            <person name="Konstantinidis K."/>
            <person name="Tiedje J.M."/>
            <person name="Richardson P."/>
        </authorList>
    </citation>
    <scope>NUCLEOTIDE SEQUENCE [LARGE SCALE GENOMIC DNA]</scope>
    <source>
        <strain>AU 1054</strain>
    </source>
</reference>
<organism>
    <name type="scientific">Burkholderia orbicola (strain AU 1054)</name>
    <dbReference type="NCBI Taxonomy" id="331271"/>
    <lineage>
        <taxon>Bacteria</taxon>
        <taxon>Pseudomonadati</taxon>
        <taxon>Pseudomonadota</taxon>
        <taxon>Betaproteobacteria</taxon>
        <taxon>Burkholderiales</taxon>
        <taxon>Burkholderiaceae</taxon>
        <taxon>Burkholderia</taxon>
        <taxon>Burkholderia cepacia complex</taxon>
        <taxon>Burkholderia orbicola</taxon>
    </lineage>
</organism>
<proteinExistence type="inferred from homology"/>
<evidence type="ECO:0000255" key="1">
    <source>
        <dbReference type="HAMAP-Rule" id="MF_01838"/>
    </source>
</evidence>
<name>FABV_BURO1</name>
<comment type="function">
    <text evidence="1">Involved in the final reduction of the elongation cycle of fatty acid synthesis (FAS II). Catalyzes the reduction of a carbon-carbon double bond in an enoyl moiety that is covalently linked to an acyl carrier protein (ACP).</text>
</comment>
<comment type="catalytic activity">
    <reaction evidence="1">
        <text>a 2,3-saturated acyl-[ACP] + NAD(+) = a (2E)-enoyl-[ACP] + NADH + H(+)</text>
        <dbReference type="Rhea" id="RHEA:10240"/>
        <dbReference type="Rhea" id="RHEA-COMP:9925"/>
        <dbReference type="Rhea" id="RHEA-COMP:9926"/>
        <dbReference type="ChEBI" id="CHEBI:15378"/>
        <dbReference type="ChEBI" id="CHEBI:57540"/>
        <dbReference type="ChEBI" id="CHEBI:57945"/>
        <dbReference type="ChEBI" id="CHEBI:78784"/>
        <dbReference type="ChEBI" id="CHEBI:78785"/>
        <dbReference type="EC" id="1.3.1.9"/>
    </reaction>
</comment>
<comment type="pathway">
    <text evidence="1">Lipid metabolism; fatty acid biosynthesis.</text>
</comment>
<comment type="subunit">
    <text evidence="1">Monomer.</text>
</comment>
<comment type="similarity">
    <text evidence="1">Belongs to the TER reductase family.</text>
</comment>
<accession>Q1BJC5</accession>
<dbReference type="EC" id="1.3.1.9" evidence="1"/>
<dbReference type="EMBL" id="CP000379">
    <property type="protein sequence ID" value="ABF80280.1"/>
    <property type="molecule type" value="Genomic_DNA"/>
</dbReference>
<dbReference type="SMR" id="Q1BJC5"/>
<dbReference type="HOGENOM" id="CLU_057698_1_0_4"/>
<dbReference type="UniPathway" id="UPA00094"/>
<dbReference type="GO" id="GO:0004318">
    <property type="term" value="F:enoyl-[acyl-carrier-protein] reductase (NADH) activity"/>
    <property type="evidence" value="ECO:0007669"/>
    <property type="project" value="UniProtKB-UniRule"/>
</dbReference>
<dbReference type="GO" id="GO:0051287">
    <property type="term" value="F:NAD binding"/>
    <property type="evidence" value="ECO:0007669"/>
    <property type="project" value="UniProtKB-UniRule"/>
</dbReference>
<dbReference type="GO" id="GO:0050343">
    <property type="term" value="F:trans-2-enoyl-CoA reductase (NADH) activity"/>
    <property type="evidence" value="ECO:0007669"/>
    <property type="project" value="TreeGrafter"/>
</dbReference>
<dbReference type="GO" id="GO:0006633">
    <property type="term" value="P:fatty acid biosynthetic process"/>
    <property type="evidence" value="ECO:0007669"/>
    <property type="project" value="UniProtKB-UniRule"/>
</dbReference>
<dbReference type="FunFam" id="3.40.50.720:FF:000221">
    <property type="entry name" value="Enoyl-[acyl-carrier-protein] reductase [NADH]"/>
    <property type="match status" value="1"/>
</dbReference>
<dbReference type="Gene3D" id="3.40.50.720">
    <property type="entry name" value="NAD(P)-binding Rossmann-like Domain"/>
    <property type="match status" value="1"/>
</dbReference>
<dbReference type="HAMAP" id="MF_01838">
    <property type="entry name" value="FabV_reductase"/>
    <property type="match status" value="1"/>
</dbReference>
<dbReference type="InterPro" id="IPR024906">
    <property type="entry name" value="Eno_Rdtase_FAD-bd_dom"/>
</dbReference>
<dbReference type="InterPro" id="IPR024910">
    <property type="entry name" value="Enoyl-CoA_Rdtase_cat_dom"/>
</dbReference>
<dbReference type="InterPro" id="IPR050048">
    <property type="entry name" value="FabV-like_NADH_b"/>
</dbReference>
<dbReference type="InterPro" id="IPR010758">
    <property type="entry name" value="Trans-2-enoyl-CoA_reductase"/>
</dbReference>
<dbReference type="NCBIfam" id="NF043048">
    <property type="entry name" value="EnoyACPredFabV"/>
    <property type="match status" value="1"/>
</dbReference>
<dbReference type="NCBIfam" id="NF010177">
    <property type="entry name" value="PRK13656.1"/>
    <property type="match status" value="1"/>
</dbReference>
<dbReference type="PANTHER" id="PTHR37480">
    <property type="entry name" value="ENOYL-[ACYL-CARRIER-PROTEIN] REDUCTASE [NADH]"/>
    <property type="match status" value="1"/>
</dbReference>
<dbReference type="PANTHER" id="PTHR37480:SF1">
    <property type="entry name" value="ENOYL-[ACYL-CARRIER-PROTEIN] REDUCTASE [NADH]"/>
    <property type="match status" value="1"/>
</dbReference>
<dbReference type="Pfam" id="PF07055">
    <property type="entry name" value="Eno-Rase_FAD_bd"/>
    <property type="match status" value="1"/>
</dbReference>
<dbReference type="Pfam" id="PF12242">
    <property type="entry name" value="Eno-Rase_NADH_b"/>
    <property type="match status" value="1"/>
</dbReference>
<dbReference type="Pfam" id="PF12241">
    <property type="entry name" value="Enoyl_reductase"/>
    <property type="match status" value="1"/>
</dbReference>
<sequence length="400" mass="43414">MIIKPRVRGFICVTTHPVGCEANVKEQIDYVTSHGPIANGPKKVLVIGASTGYGLAARISAAFGSGADTLGVFFERAGSETKPGTAGWYNSAAFEKFAAEKGLYARSINGDAFSDKVKQVTIDTIKQDLGKVDLVVYSLAAPRRTHPKTGETISSTLKPVGKAVTFRGLDTDKEVIREVSLEPATQEEIDGTVAVMGGEDWQMWIDALDEAGVLADGAKTTAFTYLGEQITHDIYWNGSIGEAKKDLDKKVLSIRDKLAAHGGDARVSVLKAVVTQASSAIPMMPLYLSLLFKVMKETGTHEGCIEQVYGLLKDSLYGATPHVDEEGRLRADYKELDPQVQDKVVAMWDKVTNENLYEMTDFAGYKTEFLRLFGFEIAGVDYDADVNPDVKIPGIIDTTV</sequence>
<gene>
    <name evidence="1" type="primary">fabV</name>
    <name type="ordered locus">Bcen_5407</name>
</gene>
<protein>
    <recommendedName>
        <fullName evidence="1">Enoyl-[acyl-carrier-protein] reductase [NADH]</fullName>
        <shortName evidence="1">ENR</shortName>
        <ecNumber evidence="1">1.3.1.9</ecNumber>
    </recommendedName>
</protein>
<keyword id="KW-0275">Fatty acid biosynthesis</keyword>
<keyword id="KW-0276">Fatty acid metabolism</keyword>
<keyword id="KW-0444">Lipid biosynthesis</keyword>
<keyword id="KW-0443">Lipid metabolism</keyword>
<keyword id="KW-0520">NAD</keyword>
<keyword id="KW-0560">Oxidoreductase</keyword>